<protein>
    <recommendedName>
        <fullName evidence="1">Large ribosomal subunit protein bL27</fullName>
    </recommendedName>
    <alternativeName>
        <fullName evidence="3">50S ribosomal protein L27</fullName>
    </alternativeName>
</protein>
<comment type="similarity">
    <text evidence="1">Belongs to the bacterial ribosomal protein bL27 family.</text>
</comment>
<sequence length="81" mass="8835">MATSKSGGSSKNGRDSISKRLGVKRSGGQFVRAGEIIIRQRGTKFHKGKNSGLGRDHTIFALKDGIVEFKTSKGRKYINII</sequence>
<name>RL27_BORRA</name>
<feature type="chain" id="PRO_1000128702" description="Large ribosomal subunit protein bL27">
    <location>
        <begin position="1"/>
        <end position="81"/>
    </location>
</feature>
<feature type="region of interest" description="Disordered" evidence="2">
    <location>
        <begin position="1"/>
        <end position="24"/>
    </location>
</feature>
<feature type="compositionally biased region" description="Polar residues" evidence="2">
    <location>
        <begin position="1"/>
        <end position="11"/>
    </location>
</feature>
<proteinExistence type="inferred from homology"/>
<organism>
    <name type="scientific">Borrelia recurrentis (strain A1)</name>
    <dbReference type="NCBI Taxonomy" id="412418"/>
    <lineage>
        <taxon>Bacteria</taxon>
        <taxon>Pseudomonadati</taxon>
        <taxon>Spirochaetota</taxon>
        <taxon>Spirochaetia</taxon>
        <taxon>Spirochaetales</taxon>
        <taxon>Borreliaceae</taxon>
        <taxon>Borrelia</taxon>
    </lineage>
</organism>
<keyword id="KW-0687">Ribonucleoprotein</keyword>
<keyword id="KW-0689">Ribosomal protein</keyword>
<reference key="1">
    <citation type="journal article" date="2008" name="PLoS Genet.">
        <title>The genome of Borrelia recurrentis, the agent of deadly louse-borne relapsing fever, is a degraded subset of tick-borne Borrelia duttonii.</title>
        <authorList>
            <person name="Lescot M."/>
            <person name="Audic S."/>
            <person name="Robert C."/>
            <person name="Nguyen T.T."/>
            <person name="Blanc G."/>
            <person name="Cutler S.J."/>
            <person name="Wincker P."/>
            <person name="Couloux A."/>
            <person name="Claverie J.-M."/>
            <person name="Raoult D."/>
            <person name="Drancourt M."/>
        </authorList>
    </citation>
    <scope>NUCLEOTIDE SEQUENCE [LARGE SCALE GENOMIC DNA]</scope>
    <source>
        <strain>A1</strain>
    </source>
</reference>
<evidence type="ECO:0000255" key="1">
    <source>
        <dbReference type="HAMAP-Rule" id="MF_00539"/>
    </source>
</evidence>
<evidence type="ECO:0000256" key="2">
    <source>
        <dbReference type="SAM" id="MobiDB-lite"/>
    </source>
</evidence>
<evidence type="ECO:0000305" key="3"/>
<dbReference type="EMBL" id="CP000993">
    <property type="protein sequence ID" value="ACH95001.1"/>
    <property type="molecule type" value="Genomic_DNA"/>
</dbReference>
<dbReference type="RefSeq" id="WP_012538517.1">
    <property type="nucleotide sequence ID" value="NZ_CP169983.1"/>
</dbReference>
<dbReference type="SMR" id="B5RQB7"/>
<dbReference type="KEGG" id="bre:BRE_788"/>
<dbReference type="HOGENOM" id="CLU_095424_4_1_12"/>
<dbReference type="Proteomes" id="UP000000612">
    <property type="component" value="Chromosome"/>
</dbReference>
<dbReference type="GO" id="GO:0022625">
    <property type="term" value="C:cytosolic large ribosomal subunit"/>
    <property type="evidence" value="ECO:0007669"/>
    <property type="project" value="TreeGrafter"/>
</dbReference>
<dbReference type="GO" id="GO:0003735">
    <property type="term" value="F:structural constituent of ribosome"/>
    <property type="evidence" value="ECO:0007669"/>
    <property type="project" value="InterPro"/>
</dbReference>
<dbReference type="GO" id="GO:0006412">
    <property type="term" value="P:translation"/>
    <property type="evidence" value="ECO:0007669"/>
    <property type="project" value="UniProtKB-UniRule"/>
</dbReference>
<dbReference type="FunFam" id="2.40.50.100:FF:000020">
    <property type="entry name" value="50S ribosomal protein L27"/>
    <property type="match status" value="1"/>
</dbReference>
<dbReference type="Gene3D" id="2.40.50.100">
    <property type="match status" value="1"/>
</dbReference>
<dbReference type="HAMAP" id="MF_00539">
    <property type="entry name" value="Ribosomal_bL27"/>
    <property type="match status" value="1"/>
</dbReference>
<dbReference type="InterPro" id="IPR001684">
    <property type="entry name" value="Ribosomal_bL27"/>
</dbReference>
<dbReference type="InterPro" id="IPR018261">
    <property type="entry name" value="Ribosomal_bL27_CS"/>
</dbReference>
<dbReference type="NCBIfam" id="TIGR00062">
    <property type="entry name" value="L27"/>
    <property type="match status" value="1"/>
</dbReference>
<dbReference type="PANTHER" id="PTHR15893:SF0">
    <property type="entry name" value="LARGE RIBOSOMAL SUBUNIT PROTEIN BL27M"/>
    <property type="match status" value="1"/>
</dbReference>
<dbReference type="PANTHER" id="PTHR15893">
    <property type="entry name" value="RIBOSOMAL PROTEIN L27"/>
    <property type="match status" value="1"/>
</dbReference>
<dbReference type="Pfam" id="PF01016">
    <property type="entry name" value="Ribosomal_L27"/>
    <property type="match status" value="1"/>
</dbReference>
<dbReference type="PRINTS" id="PR00063">
    <property type="entry name" value="RIBOSOMALL27"/>
</dbReference>
<dbReference type="SUPFAM" id="SSF110324">
    <property type="entry name" value="Ribosomal L27 protein-like"/>
    <property type="match status" value="1"/>
</dbReference>
<dbReference type="PROSITE" id="PS00831">
    <property type="entry name" value="RIBOSOMAL_L27"/>
    <property type="match status" value="1"/>
</dbReference>
<gene>
    <name evidence="1" type="primary">rpmA</name>
    <name type="ordered locus">BRE_788</name>
</gene>
<accession>B5RQB7</accession>